<dbReference type="EC" id="3.4.21.4"/>
<dbReference type="EMBL" id="X04574">
    <property type="protein sequence ID" value="CAA28243.1"/>
    <property type="molecule type" value="mRNA"/>
</dbReference>
<dbReference type="EMBL" id="X04577">
    <property type="protein sequence ID" value="CAA28245.1"/>
    <property type="molecule type" value="Genomic_DNA"/>
</dbReference>
<dbReference type="CCDS" id="CCDS20050.1"/>
<dbReference type="PIR" id="B25528">
    <property type="entry name" value="B25528"/>
</dbReference>
<dbReference type="RefSeq" id="NP_033456.1">
    <property type="nucleotide sequence ID" value="NM_009430.2"/>
</dbReference>
<dbReference type="SMR" id="P07146"/>
<dbReference type="BioGRID" id="204335">
    <property type="interactions" value="3"/>
</dbReference>
<dbReference type="FunCoup" id="P07146">
    <property type="interactions" value="630"/>
</dbReference>
<dbReference type="STRING" id="10090.ENSMUSP00000065393"/>
<dbReference type="MEROPS" id="S01.064"/>
<dbReference type="GlyGen" id="P07146">
    <property type="glycosylation" value="1 site, 1 O-linked glycan (1 site)"/>
</dbReference>
<dbReference type="PhosphoSitePlus" id="P07146"/>
<dbReference type="jPOST" id="P07146"/>
<dbReference type="PaxDb" id="10090-ENSMUSP00000065393"/>
<dbReference type="PeptideAtlas" id="P07146"/>
<dbReference type="ProteomicsDB" id="300030"/>
<dbReference type="DNASU" id="22072"/>
<dbReference type="Ensembl" id="ENSMUST00000070380.5">
    <property type="protein sequence ID" value="ENSMUSP00000065393.5"/>
    <property type="gene ID" value="ENSMUSG00000057163.4"/>
</dbReference>
<dbReference type="GeneID" id="22072"/>
<dbReference type="KEGG" id="mmu:22072"/>
<dbReference type="UCSC" id="uc009boz.2">
    <property type="organism name" value="mouse"/>
</dbReference>
<dbReference type="AGR" id="MGI:102759"/>
<dbReference type="CTD" id="5645"/>
<dbReference type="MGI" id="MGI:102759">
    <property type="gene designation" value="Prss2"/>
</dbReference>
<dbReference type="VEuPathDB" id="HostDB:ENSMUSG00000057163"/>
<dbReference type="eggNOG" id="KOG3627">
    <property type="taxonomic scope" value="Eukaryota"/>
</dbReference>
<dbReference type="GeneTree" id="ENSGT01050000244883"/>
<dbReference type="HOGENOM" id="CLU_006842_7_0_1"/>
<dbReference type="InParanoid" id="P07146"/>
<dbReference type="OMA" id="PCTECLI"/>
<dbReference type="OrthoDB" id="10059102at2759"/>
<dbReference type="PhylomeDB" id="P07146"/>
<dbReference type="TreeFam" id="TF331065"/>
<dbReference type="Reactome" id="R-MMU-1462054">
    <property type="pathway name" value="Alpha-defensins"/>
</dbReference>
<dbReference type="Reactome" id="R-MMU-1592389">
    <property type="pathway name" value="Activation of Matrix Metalloproteinases"/>
</dbReference>
<dbReference type="Reactome" id="R-MMU-6798695">
    <property type="pathway name" value="Neutrophil degranulation"/>
</dbReference>
<dbReference type="Reactome" id="R-MMU-6803157">
    <property type="pathway name" value="Antimicrobial peptides"/>
</dbReference>
<dbReference type="BioGRID-ORCS" id="22072">
    <property type="hits" value="2 hits in 76 CRISPR screens"/>
</dbReference>
<dbReference type="ChiTaRS" id="Prss2">
    <property type="organism name" value="mouse"/>
</dbReference>
<dbReference type="PRO" id="PR:P07146"/>
<dbReference type="Proteomes" id="UP000000589">
    <property type="component" value="Chromosome 6"/>
</dbReference>
<dbReference type="RNAct" id="P07146">
    <property type="molecule type" value="protein"/>
</dbReference>
<dbReference type="Bgee" id="ENSMUSG00000057163">
    <property type="expression patterns" value="Expressed in pyloric antrum and 99 other cell types or tissues"/>
</dbReference>
<dbReference type="ExpressionAtlas" id="P07146">
    <property type="expression patterns" value="baseline and differential"/>
</dbReference>
<dbReference type="GO" id="GO:0062023">
    <property type="term" value="C:collagen-containing extracellular matrix"/>
    <property type="evidence" value="ECO:0007005"/>
    <property type="project" value="BHF-UCL"/>
</dbReference>
<dbReference type="GO" id="GO:0005576">
    <property type="term" value="C:extracellular region"/>
    <property type="evidence" value="ECO:0000250"/>
    <property type="project" value="UniProtKB"/>
</dbReference>
<dbReference type="GO" id="GO:0005615">
    <property type="term" value="C:extracellular space"/>
    <property type="evidence" value="ECO:0000250"/>
    <property type="project" value="UniProtKB"/>
</dbReference>
<dbReference type="GO" id="GO:0005509">
    <property type="term" value="F:calcium ion binding"/>
    <property type="evidence" value="ECO:0000250"/>
    <property type="project" value="UniProtKB"/>
</dbReference>
<dbReference type="GO" id="GO:0004252">
    <property type="term" value="F:serine-type endopeptidase activity"/>
    <property type="evidence" value="ECO:0000314"/>
    <property type="project" value="MGI"/>
</dbReference>
<dbReference type="GO" id="GO:0030574">
    <property type="term" value="P:collagen catabolic process"/>
    <property type="evidence" value="ECO:0000250"/>
    <property type="project" value="UniProtKB"/>
</dbReference>
<dbReference type="GO" id="GO:0007586">
    <property type="term" value="P:digestion"/>
    <property type="evidence" value="ECO:0007669"/>
    <property type="project" value="UniProtKB-KW"/>
</dbReference>
<dbReference type="GO" id="GO:0006508">
    <property type="term" value="P:proteolysis"/>
    <property type="evidence" value="ECO:0000250"/>
    <property type="project" value="UniProtKB"/>
</dbReference>
<dbReference type="GO" id="GO:1905640">
    <property type="term" value="P:response to acetaldehyde"/>
    <property type="evidence" value="ECO:0007669"/>
    <property type="project" value="Ensembl"/>
</dbReference>
<dbReference type="GO" id="GO:0031000">
    <property type="term" value="P:response to caffeine"/>
    <property type="evidence" value="ECO:0007669"/>
    <property type="project" value="Ensembl"/>
</dbReference>
<dbReference type="GO" id="GO:0035094">
    <property type="term" value="P:response to nicotine"/>
    <property type="evidence" value="ECO:0007669"/>
    <property type="project" value="Ensembl"/>
</dbReference>
<dbReference type="GO" id="GO:0007584">
    <property type="term" value="P:response to nutrient"/>
    <property type="evidence" value="ECO:0007669"/>
    <property type="project" value="Ensembl"/>
</dbReference>
<dbReference type="CDD" id="cd00190">
    <property type="entry name" value="Tryp_SPc"/>
    <property type="match status" value="1"/>
</dbReference>
<dbReference type="FunFam" id="2.40.10.10:FF:000019">
    <property type="entry name" value="Anionic trypsin"/>
    <property type="match status" value="1"/>
</dbReference>
<dbReference type="Gene3D" id="2.40.10.10">
    <property type="entry name" value="Trypsin-like serine proteases"/>
    <property type="match status" value="2"/>
</dbReference>
<dbReference type="InterPro" id="IPR009003">
    <property type="entry name" value="Peptidase_S1_PA"/>
</dbReference>
<dbReference type="InterPro" id="IPR043504">
    <property type="entry name" value="Peptidase_S1_PA_chymotrypsin"/>
</dbReference>
<dbReference type="InterPro" id="IPR001314">
    <property type="entry name" value="Peptidase_S1A"/>
</dbReference>
<dbReference type="InterPro" id="IPR050127">
    <property type="entry name" value="Serine_Proteases_S1"/>
</dbReference>
<dbReference type="InterPro" id="IPR001254">
    <property type="entry name" value="Trypsin_dom"/>
</dbReference>
<dbReference type="InterPro" id="IPR018114">
    <property type="entry name" value="TRYPSIN_HIS"/>
</dbReference>
<dbReference type="InterPro" id="IPR033116">
    <property type="entry name" value="TRYPSIN_SER"/>
</dbReference>
<dbReference type="PANTHER" id="PTHR24264:SF57">
    <property type="entry name" value="TRYPSIN-2"/>
    <property type="match status" value="1"/>
</dbReference>
<dbReference type="PANTHER" id="PTHR24264">
    <property type="entry name" value="TRYPSIN-RELATED"/>
    <property type="match status" value="1"/>
</dbReference>
<dbReference type="Pfam" id="PF00089">
    <property type="entry name" value="Trypsin"/>
    <property type="match status" value="1"/>
</dbReference>
<dbReference type="PRINTS" id="PR00722">
    <property type="entry name" value="CHYMOTRYPSIN"/>
</dbReference>
<dbReference type="SMART" id="SM00020">
    <property type="entry name" value="Tryp_SPc"/>
    <property type="match status" value="1"/>
</dbReference>
<dbReference type="SUPFAM" id="SSF50494">
    <property type="entry name" value="Trypsin-like serine proteases"/>
    <property type="match status" value="1"/>
</dbReference>
<dbReference type="PROSITE" id="PS50240">
    <property type="entry name" value="TRYPSIN_DOM"/>
    <property type="match status" value="1"/>
</dbReference>
<dbReference type="PROSITE" id="PS00134">
    <property type="entry name" value="TRYPSIN_HIS"/>
    <property type="match status" value="1"/>
</dbReference>
<dbReference type="PROSITE" id="PS00135">
    <property type="entry name" value="TRYPSIN_SER"/>
    <property type="match status" value="1"/>
</dbReference>
<sequence length="246" mass="26204">MSALLILALVGAAVAFPVDDDDKIVGGYTCRESSVPYQVSLNAGYHFCGGSLINDQWVVSAAHCYKYRIQVRLGEHNINVLEGNEQFVDSAKIIRHPNYNSWTLDNDIMLIKLASPVTLNARVASVPLPSSCAPAGTQCLISGWGNTLSNGVNNPDLLQCVDAPVLPQADCEASYPGDITNNMICVGFLEGGKDSCQGDSGGPVVCNGELQGIVSWGYGCAQPDAPGVYTKVCNYVDWIQNTIADN</sequence>
<protein>
    <recommendedName>
        <fullName>Anionic trypsin-2</fullName>
        <ecNumber>3.4.21.4</ecNumber>
    </recommendedName>
    <alternativeName>
        <fullName>Anionic trypsin II</fullName>
    </alternativeName>
    <alternativeName>
        <fullName>Pretrypsinogen II</fullName>
    </alternativeName>
    <alternativeName>
        <fullName>Serine protease 2</fullName>
    </alternativeName>
</protein>
<accession>P07146</accession>
<proteinExistence type="evidence at protein level"/>
<feature type="signal peptide">
    <location>
        <begin position="1"/>
        <end position="15"/>
    </location>
</feature>
<feature type="propeptide" id="PRO_0000028203" description="Activation peptide">
    <location>
        <begin position="16"/>
        <end position="23"/>
    </location>
</feature>
<feature type="chain" id="PRO_0000028204" description="Anionic trypsin-2">
    <location>
        <begin position="24"/>
        <end position="246"/>
    </location>
</feature>
<feature type="domain" description="Peptidase S1" evidence="2">
    <location>
        <begin position="24"/>
        <end position="244"/>
    </location>
</feature>
<feature type="active site" description="Charge relay system" evidence="1">
    <location>
        <position position="63"/>
    </location>
</feature>
<feature type="active site" description="Charge relay system" evidence="1">
    <location>
        <position position="107"/>
    </location>
</feature>
<feature type="active site" description="Charge relay system" evidence="1">
    <location>
        <position position="200"/>
    </location>
</feature>
<feature type="binding site" evidence="1">
    <location>
        <position position="75"/>
    </location>
    <ligand>
        <name>Ca(2+)</name>
        <dbReference type="ChEBI" id="CHEBI:29108"/>
    </ligand>
</feature>
<feature type="binding site" evidence="1">
    <location>
        <position position="77"/>
    </location>
    <ligand>
        <name>Ca(2+)</name>
        <dbReference type="ChEBI" id="CHEBI:29108"/>
    </ligand>
</feature>
<feature type="binding site" evidence="1">
    <location>
        <position position="80"/>
    </location>
    <ligand>
        <name>Ca(2+)</name>
        <dbReference type="ChEBI" id="CHEBI:29108"/>
    </ligand>
</feature>
<feature type="binding site" evidence="1">
    <location>
        <position position="85"/>
    </location>
    <ligand>
        <name>Ca(2+)</name>
        <dbReference type="ChEBI" id="CHEBI:29108"/>
    </ligand>
</feature>
<feature type="site" description="Required for specificity" evidence="1">
    <location>
        <position position="194"/>
    </location>
</feature>
<feature type="disulfide bond" evidence="2">
    <location>
        <begin position="30"/>
        <end position="160"/>
    </location>
</feature>
<feature type="disulfide bond" evidence="2">
    <location>
        <begin position="48"/>
        <end position="64"/>
    </location>
</feature>
<feature type="disulfide bond" evidence="2">
    <location>
        <begin position="132"/>
        <end position="233"/>
    </location>
</feature>
<feature type="disulfide bond" evidence="2">
    <location>
        <begin position="139"/>
        <end position="206"/>
    </location>
</feature>
<feature type="disulfide bond" evidence="2">
    <location>
        <begin position="171"/>
        <end position="185"/>
    </location>
</feature>
<feature type="disulfide bond" evidence="2">
    <location>
        <begin position="196"/>
        <end position="220"/>
    </location>
</feature>
<gene>
    <name type="primary">Prss2</name>
    <name type="synonym">Try2</name>
</gene>
<name>TRY2_MOUSE</name>
<reference key="1">
    <citation type="journal article" date="1986" name="Nucleic Acids Res.">
        <title>Sequence organisation and transcriptional regulation of the mouse elastase II and trypsin genes.</title>
        <authorList>
            <person name="Stevenson B.J."/>
            <person name="Hagenbuechle O."/>
            <person name="Wellauer P.K."/>
        </authorList>
    </citation>
    <scope>NUCLEOTIDE SEQUENCE [GENOMIC DNA / MRNA]</scope>
    <source>
        <strain>A/J</strain>
    </source>
</reference>
<reference key="2">
    <citation type="journal article" date="1999" name="J. Biol. Chem.">
        <title>A homologue of pancreatic trypsin is localized in the acrosome of mammalian sperm and is released during acrosome reaction.</title>
        <authorList>
            <person name="Ohmura K."/>
            <person name="Kohno N."/>
            <person name="Kobayashi Y."/>
            <person name="Yamagata K."/>
            <person name="Sato S."/>
            <person name="Kashiwabara S."/>
            <person name="Baba T."/>
        </authorList>
    </citation>
    <scope>TISSUE SPECIFICITY</scope>
    <source>
        <strain>129/SvJ</strain>
    </source>
</reference>
<reference key="3">
    <citation type="journal article" date="2010" name="Cell">
        <title>A tissue-specific atlas of mouse protein phosphorylation and expression.</title>
        <authorList>
            <person name="Huttlin E.L."/>
            <person name="Jedrychowski M.P."/>
            <person name="Elias J.E."/>
            <person name="Goswami T."/>
            <person name="Rad R."/>
            <person name="Beausoleil S.A."/>
            <person name="Villen J."/>
            <person name="Haas W."/>
            <person name="Sowa M.E."/>
            <person name="Gygi S.P."/>
        </authorList>
    </citation>
    <scope>IDENTIFICATION BY MASS SPECTROMETRY [LARGE SCALE ANALYSIS]</scope>
    <source>
        <tissue>Liver</tissue>
        <tissue>Lung</tissue>
        <tissue>Pancreas</tissue>
        <tissue>Spleen</tissue>
    </source>
</reference>
<organism>
    <name type="scientific">Mus musculus</name>
    <name type="common">Mouse</name>
    <dbReference type="NCBI Taxonomy" id="10090"/>
    <lineage>
        <taxon>Eukaryota</taxon>
        <taxon>Metazoa</taxon>
        <taxon>Chordata</taxon>
        <taxon>Craniata</taxon>
        <taxon>Vertebrata</taxon>
        <taxon>Euteleostomi</taxon>
        <taxon>Mammalia</taxon>
        <taxon>Eutheria</taxon>
        <taxon>Euarchontoglires</taxon>
        <taxon>Glires</taxon>
        <taxon>Rodentia</taxon>
        <taxon>Myomorpha</taxon>
        <taxon>Muroidea</taxon>
        <taxon>Muridae</taxon>
        <taxon>Murinae</taxon>
        <taxon>Mus</taxon>
        <taxon>Mus</taxon>
    </lineage>
</organism>
<keyword id="KW-0106">Calcium</keyword>
<keyword id="KW-0222">Digestion</keyword>
<keyword id="KW-1015">Disulfide bond</keyword>
<keyword id="KW-0378">Hydrolase</keyword>
<keyword id="KW-0479">Metal-binding</keyword>
<keyword id="KW-0645">Protease</keyword>
<keyword id="KW-1185">Reference proteome</keyword>
<keyword id="KW-0964">Secreted</keyword>
<keyword id="KW-0720">Serine protease</keyword>
<keyword id="KW-0732">Signal</keyword>
<keyword id="KW-0865">Zymogen</keyword>
<comment type="catalytic activity">
    <reaction>
        <text>Preferential cleavage: Arg-|-Xaa, Lys-|-Xaa.</text>
        <dbReference type="EC" id="3.4.21.4"/>
    </reaction>
</comment>
<comment type="cofactor">
    <cofactor evidence="1">
        <name>Ca(2+)</name>
        <dbReference type="ChEBI" id="CHEBI:29108"/>
    </cofactor>
    <text evidence="1">Binds 1 Ca(2+) ion per subunit.</text>
</comment>
<comment type="subcellular location">
    <subcellularLocation>
        <location>Secreted</location>
        <location>Extracellular space</location>
    </subcellularLocation>
</comment>
<comment type="tissue specificity">
    <text evidence="3">Expressed in the pancreas, lung and kidney.</text>
</comment>
<comment type="similarity">
    <text evidence="2">Belongs to the peptidase S1 family.</text>
</comment>
<evidence type="ECO:0000250" key="1"/>
<evidence type="ECO:0000255" key="2">
    <source>
        <dbReference type="PROSITE-ProRule" id="PRU00274"/>
    </source>
</evidence>
<evidence type="ECO:0000269" key="3">
    <source>
    </source>
</evidence>